<gene>
    <name evidence="1" type="primary">kup</name>
    <name type="ordered locus">Ppro_0610</name>
</gene>
<accession>A1ALM1</accession>
<comment type="function">
    <text evidence="1">Transport of potassium into the cell. Likely operates as a K(+):H(+) symporter.</text>
</comment>
<comment type="catalytic activity">
    <reaction evidence="1">
        <text>K(+)(in) + H(+)(in) = K(+)(out) + H(+)(out)</text>
        <dbReference type="Rhea" id="RHEA:28490"/>
        <dbReference type="ChEBI" id="CHEBI:15378"/>
        <dbReference type="ChEBI" id="CHEBI:29103"/>
    </reaction>
    <physiologicalReaction direction="right-to-left" evidence="1">
        <dbReference type="Rhea" id="RHEA:28492"/>
    </physiologicalReaction>
</comment>
<comment type="subcellular location">
    <subcellularLocation>
        <location evidence="1">Cell inner membrane</location>
        <topology evidence="1">Multi-pass membrane protein</topology>
    </subcellularLocation>
</comment>
<comment type="similarity">
    <text evidence="1">Belongs to the HAK/KUP transporter (TC 2.A.72) family.</text>
</comment>
<keyword id="KW-0997">Cell inner membrane</keyword>
<keyword id="KW-1003">Cell membrane</keyword>
<keyword id="KW-0406">Ion transport</keyword>
<keyword id="KW-0472">Membrane</keyword>
<keyword id="KW-0630">Potassium</keyword>
<keyword id="KW-0633">Potassium transport</keyword>
<keyword id="KW-1185">Reference proteome</keyword>
<keyword id="KW-0769">Symport</keyword>
<keyword id="KW-0812">Transmembrane</keyword>
<keyword id="KW-1133">Transmembrane helix</keyword>
<keyword id="KW-0813">Transport</keyword>
<dbReference type="EMBL" id="CP000482">
    <property type="protein sequence ID" value="ABK98241.1"/>
    <property type="molecule type" value="Genomic_DNA"/>
</dbReference>
<dbReference type="RefSeq" id="WP_011734554.1">
    <property type="nucleotide sequence ID" value="NC_008609.1"/>
</dbReference>
<dbReference type="STRING" id="338966.Ppro_0610"/>
<dbReference type="KEGG" id="ppd:Ppro_0610"/>
<dbReference type="eggNOG" id="COG3158">
    <property type="taxonomic scope" value="Bacteria"/>
</dbReference>
<dbReference type="HOGENOM" id="CLU_008142_4_2_7"/>
<dbReference type="OrthoDB" id="9805577at2"/>
<dbReference type="Proteomes" id="UP000006732">
    <property type="component" value="Chromosome"/>
</dbReference>
<dbReference type="GO" id="GO:0005886">
    <property type="term" value="C:plasma membrane"/>
    <property type="evidence" value="ECO:0007669"/>
    <property type="project" value="UniProtKB-SubCell"/>
</dbReference>
<dbReference type="GO" id="GO:0015079">
    <property type="term" value="F:potassium ion transmembrane transporter activity"/>
    <property type="evidence" value="ECO:0007669"/>
    <property type="project" value="UniProtKB-UniRule"/>
</dbReference>
<dbReference type="GO" id="GO:0015293">
    <property type="term" value="F:symporter activity"/>
    <property type="evidence" value="ECO:0007669"/>
    <property type="project" value="UniProtKB-UniRule"/>
</dbReference>
<dbReference type="HAMAP" id="MF_01522">
    <property type="entry name" value="Kup"/>
    <property type="match status" value="1"/>
</dbReference>
<dbReference type="InterPro" id="IPR003855">
    <property type="entry name" value="K+_transporter"/>
</dbReference>
<dbReference type="InterPro" id="IPR053952">
    <property type="entry name" value="K_trans_C"/>
</dbReference>
<dbReference type="InterPro" id="IPR053951">
    <property type="entry name" value="K_trans_N"/>
</dbReference>
<dbReference type="InterPro" id="IPR023051">
    <property type="entry name" value="Kup"/>
</dbReference>
<dbReference type="PANTHER" id="PTHR30540:SF83">
    <property type="entry name" value="K+ POTASSIUM TRANSPORTER"/>
    <property type="match status" value="1"/>
</dbReference>
<dbReference type="PANTHER" id="PTHR30540">
    <property type="entry name" value="OSMOTIC STRESS POTASSIUM TRANSPORTER"/>
    <property type="match status" value="1"/>
</dbReference>
<dbReference type="Pfam" id="PF02705">
    <property type="entry name" value="K_trans"/>
    <property type="match status" value="1"/>
</dbReference>
<dbReference type="Pfam" id="PF22776">
    <property type="entry name" value="K_trans_C"/>
    <property type="match status" value="1"/>
</dbReference>
<name>KUP_PELPD</name>
<feature type="chain" id="PRO_0000292618" description="Probable potassium transport system protein Kup">
    <location>
        <begin position="1"/>
        <end position="605"/>
    </location>
</feature>
<feature type="transmembrane region" description="Helical" evidence="1">
    <location>
        <begin position="18"/>
        <end position="38"/>
    </location>
</feature>
<feature type="transmembrane region" description="Helical" evidence="1">
    <location>
        <begin position="46"/>
        <end position="66"/>
    </location>
</feature>
<feature type="transmembrane region" description="Helical" evidence="1">
    <location>
        <begin position="97"/>
        <end position="117"/>
    </location>
</feature>
<feature type="transmembrane region" description="Helical" evidence="1">
    <location>
        <begin position="138"/>
        <end position="158"/>
    </location>
</feature>
<feature type="transmembrane region" description="Helical" evidence="1">
    <location>
        <begin position="169"/>
        <end position="189"/>
    </location>
</feature>
<feature type="transmembrane region" description="Helical" evidence="1">
    <location>
        <begin position="204"/>
        <end position="224"/>
    </location>
</feature>
<feature type="transmembrane region" description="Helical" evidence="1">
    <location>
        <begin position="247"/>
        <end position="267"/>
    </location>
</feature>
<feature type="transmembrane region" description="Helical" evidence="1">
    <location>
        <begin position="287"/>
        <end position="307"/>
    </location>
</feature>
<feature type="transmembrane region" description="Helical" evidence="1">
    <location>
        <begin position="339"/>
        <end position="359"/>
    </location>
</feature>
<feature type="transmembrane region" description="Helical" evidence="1">
    <location>
        <begin position="368"/>
        <end position="388"/>
    </location>
</feature>
<feature type="transmembrane region" description="Helical" evidence="1">
    <location>
        <begin position="395"/>
        <end position="415"/>
    </location>
</feature>
<feature type="transmembrane region" description="Helical" evidence="1">
    <location>
        <begin position="418"/>
        <end position="438"/>
    </location>
</feature>
<evidence type="ECO:0000255" key="1">
    <source>
        <dbReference type="HAMAP-Rule" id="MF_01522"/>
    </source>
</evidence>
<protein>
    <recommendedName>
        <fullName evidence="1">Probable potassium transport system protein Kup</fullName>
    </recommendedName>
</protein>
<reference key="1">
    <citation type="submission" date="2006-10" db="EMBL/GenBank/DDBJ databases">
        <title>Complete sequence of chromosome of Pelobacter propionicus DSM 2379.</title>
        <authorList>
            <consortium name="US DOE Joint Genome Institute"/>
            <person name="Copeland A."/>
            <person name="Lucas S."/>
            <person name="Lapidus A."/>
            <person name="Barry K."/>
            <person name="Detter J.C."/>
            <person name="Glavina del Rio T."/>
            <person name="Hammon N."/>
            <person name="Israni S."/>
            <person name="Dalin E."/>
            <person name="Tice H."/>
            <person name="Pitluck S."/>
            <person name="Saunders E."/>
            <person name="Brettin T."/>
            <person name="Bruce D."/>
            <person name="Han C."/>
            <person name="Tapia R."/>
            <person name="Schmutz J."/>
            <person name="Larimer F."/>
            <person name="Land M."/>
            <person name="Hauser L."/>
            <person name="Kyrpides N."/>
            <person name="Kim E."/>
            <person name="Lovley D."/>
            <person name="Richardson P."/>
        </authorList>
    </citation>
    <scope>NUCLEOTIDE SEQUENCE [LARGE SCALE GENOMIC DNA]</scope>
    <source>
        <strain>DSM 2379 / NBRC 103807 / OttBd1</strain>
    </source>
</reference>
<organism>
    <name type="scientific">Pelobacter propionicus (strain DSM 2379 / NBRC 103807 / OttBd1)</name>
    <dbReference type="NCBI Taxonomy" id="338966"/>
    <lineage>
        <taxon>Bacteria</taxon>
        <taxon>Pseudomonadati</taxon>
        <taxon>Thermodesulfobacteriota</taxon>
        <taxon>Desulfuromonadia</taxon>
        <taxon>Desulfuromonadales</taxon>
        <taxon>Desulfuromonadaceae</taxon>
        <taxon>Pelobacter</taxon>
    </lineage>
</organism>
<proteinExistence type="inferred from homology"/>
<sequence length="605" mass="66602">MKHGETDSYWGGIIKSMGLVFGDIGTSPIYTLTVIIALTKPTQDNILGIISLIVWTLIILVHLEYAVLAMSLSRKGEGGEIVLREILVRMIKPGRQMAFVTFLTYLGVALLMGDGVITPAISILSAVEGTLLIPGLGGLSQNTLILIAGTIALFLFVFQYKGTDKVARAFGPIMVLWFAALALSGAISVSSHPGILAAISPHHAISFLMHNGLPGFFVLSEVILCATGGEALYADMGHLGRKPVKRAWYFVFVALVINYLGQGAFIITHPDAKNILFGMLQYQAPLFYIPFLILTILATIIASQALISGVFSIVYQGINTRMLPLLKVDYTSNQLKSQIYIGSVNWLLLCLVILIMLVFRKSANLAAAYGFAVTGTMVITGIMMTMIFSRTTKKWKVPLALFVTLVDVVFLVSNCNKLPHGGYWSLILASVPLAVILIWTRGQRGLYLALRPLDLETYLLSYEQIYKKGRIAGTGLFFVKEWNIIPPYLVHCTIRSNIVYERNVLISIVRTDEPFGVESVLECGIGTGLDGFMIKAGYMEIFDIELLLKQNGIQEKVIFYGIEDIATTNPIWRVFSVIKKLTPNFVQFNKVPAAKLQGVITRVEM</sequence>